<protein>
    <recommendedName>
        <fullName evidence="1">tRNA pseudouridine synthase B</fullName>
        <ecNumber evidence="1">5.4.99.25</ecNumber>
    </recommendedName>
    <alternativeName>
        <fullName evidence="1">tRNA pseudouridine(55) synthase</fullName>
        <shortName evidence="1">Psi55 synthase</shortName>
    </alternativeName>
    <alternativeName>
        <fullName evidence="1">tRNA pseudouridylate synthase</fullName>
    </alternativeName>
    <alternativeName>
        <fullName evidence="1">tRNA-uridine isomerase</fullName>
    </alternativeName>
</protein>
<gene>
    <name evidence="1" type="primary">truB</name>
    <name type="ordered locus">PSPA7_5460</name>
</gene>
<feature type="chain" id="PRO_1000084644" description="tRNA pseudouridine synthase B">
    <location>
        <begin position="1"/>
        <end position="304"/>
    </location>
</feature>
<feature type="active site" description="Nucleophile" evidence="1">
    <location>
        <position position="48"/>
    </location>
</feature>
<name>TRUB_PSEP7</name>
<keyword id="KW-0413">Isomerase</keyword>
<keyword id="KW-0819">tRNA processing</keyword>
<proteinExistence type="inferred from homology"/>
<reference key="1">
    <citation type="submission" date="2007-06" db="EMBL/GenBank/DDBJ databases">
        <authorList>
            <person name="Dodson R.J."/>
            <person name="Harkins D."/>
            <person name="Paulsen I.T."/>
        </authorList>
    </citation>
    <scope>NUCLEOTIDE SEQUENCE [LARGE SCALE GENOMIC DNA]</scope>
    <source>
        <strain>DSM 24068 / PA7</strain>
    </source>
</reference>
<dbReference type="EC" id="5.4.99.25" evidence="1"/>
<dbReference type="EMBL" id="CP000744">
    <property type="protein sequence ID" value="ABR84599.1"/>
    <property type="molecule type" value="Genomic_DNA"/>
</dbReference>
<dbReference type="RefSeq" id="WP_003148738.1">
    <property type="nucleotide sequence ID" value="NC_009656.1"/>
</dbReference>
<dbReference type="SMR" id="A6VCJ9"/>
<dbReference type="KEGG" id="pap:PSPA7_5460"/>
<dbReference type="HOGENOM" id="CLU_032087_0_3_6"/>
<dbReference type="Proteomes" id="UP000001582">
    <property type="component" value="Chromosome"/>
</dbReference>
<dbReference type="GO" id="GO:0003723">
    <property type="term" value="F:RNA binding"/>
    <property type="evidence" value="ECO:0007669"/>
    <property type="project" value="InterPro"/>
</dbReference>
<dbReference type="GO" id="GO:0160148">
    <property type="term" value="F:tRNA pseudouridine(55) synthase activity"/>
    <property type="evidence" value="ECO:0007669"/>
    <property type="project" value="UniProtKB-EC"/>
</dbReference>
<dbReference type="GO" id="GO:1990481">
    <property type="term" value="P:mRNA pseudouridine synthesis"/>
    <property type="evidence" value="ECO:0007669"/>
    <property type="project" value="TreeGrafter"/>
</dbReference>
<dbReference type="GO" id="GO:0031119">
    <property type="term" value="P:tRNA pseudouridine synthesis"/>
    <property type="evidence" value="ECO:0007669"/>
    <property type="project" value="UniProtKB-UniRule"/>
</dbReference>
<dbReference type="CDD" id="cd02573">
    <property type="entry name" value="PseudoU_synth_EcTruB"/>
    <property type="match status" value="1"/>
</dbReference>
<dbReference type="CDD" id="cd21152">
    <property type="entry name" value="PUA_TruB_bacterial"/>
    <property type="match status" value="1"/>
</dbReference>
<dbReference type="FunFam" id="2.30.130.10:FF:000012">
    <property type="entry name" value="tRNA pseudouridine synthase B"/>
    <property type="match status" value="1"/>
</dbReference>
<dbReference type="FunFam" id="3.30.2350.10:FF:000003">
    <property type="entry name" value="tRNA pseudouridine synthase B"/>
    <property type="match status" value="1"/>
</dbReference>
<dbReference type="Gene3D" id="3.30.2350.10">
    <property type="entry name" value="Pseudouridine synthase"/>
    <property type="match status" value="1"/>
</dbReference>
<dbReference type="Gene3D" id="2.30.130.10">
    <property type="entry name" value="PUA domain"/>
    <property type="match status" value="1"/>
</dbReference>
<dbReference type="HAMAP" id="MF_01080">
    <property type="entry name" value="TruB_bact"/>
    <property type="match status" value="1"/>
</dbReference>
<dbReference type="InterPro" id="IPR020103">
    <property type="entry name" value="PsdUridine_synth_cat_dom_sf"/>
</dbReference>
<dbReference type="InterPro" id="IPR002501">
    <property type="entry name" value="PsdUridine_synth_N"/>
</dbReference>
<dbReference type="InterPro" id="IPR015947">
    <property type="entry name" value="PUA-like_sf"/>
</dbReference>
<dbReference type="InterPro" id="IPR036974">
    <property type="entry name" value="PUA_sf"/>
</dbReference>
<dbReference type="InterPro" id="IPR014780">
    <property type="entry name" value="tRNA_psdUridine_synth_TruB"/>
</dbReference>
<dbReference type="InterPro" id="IPR015240">
    <property type="entry name" value="tRNA_sdUridine_synth_fam1_C"/>
</dbReference>
<dbReference type="InterPro" id="IPR032819">
    <property type="entry name" value="TruB_C"/>
</dbReference>
<dbReference type="NCBIfam" id="TIGR00431">
    <property type="entry name" value="TruB"/>
    <property type="match status" value="1"/>
</dbReference>
<dbReference type="PANTHER" id="PTHR13767:SF2">
    <property type="entry name" value="PSEUDOURIDYLATE SYNTHASE TRUB1"/>
    <property type="match status" value="1"/>
</dbReference>
<dbReference type="PANTHER" id="PTHR13767">
    <property type="entry name" value="TRNA-PSEUDOURIDINE SYNTHASE"/>
    <property type="match status" value="1"/>
</dbReference>
<dbReference type="Pfam" id="PF09157">
    <property type="entry name" value="TruB-C_2"/>
    <property type="match status" value="1"/>
</dbReference>
<dbReference type="Pfam" id="PF16198">
    <property type="entry name" value="TruB_C_2"/>
    <property type="match status" value="1"/>
</dbReference>
<dbReference type="Pfam" id="PF01509">
    <property type="entry name" value="TruB_N"/>
    <property type="match status" value="1"/>
</dbReference>
<dbReference type="SUPFAM" id="SSF55120">
    <property type="entry name" value="Pseudouridine synthase"/>
    <property type="match status" value="1"/>
</dbReference>
<dbReference type="SUPFAM" id="SSF88697">
    <property type="entry name" value="PUA domain-like"/>
    <property type="match status" value="1"/>
</dbReference>
<sequence length="304" mass="33470">MAQVKRIRRSISGILVLDKPRGMSSNQALQKVRWLLNAEKAGHTGSLDPLATGVLPLCFGEATKFSQYLLDADKGYETVMRMGITTTTGDAEGEMLAEREVTVGRDDLEQALPRFRGDIEQVPPMYSALKKDGQPLYKLARAGEVVEREARSVTITRLDLLSFEPPCATLAVSCSKGTYVRTLVEDLGQVLGCGAHVAALRRTQAGPFVLAQAITLETLERVHAEGGPEALDQFLMPEDSGLLHWPVLQLSEHSAYYWLHGQPVRAPEAPKFGWLRVQDHTGRFIGIGEVTDDGRIAPRRLIRS</sequence>
<evidence type="ECO:0000255" key="1">
    <source>
        <dbReference type="HAMAP-Rule" id="MF_01080"/>
    </source>
</evidence>
<accession>A6VCJ9</accession>
<comment type="function">
    <text evidence="1">Responsible for synthesis of pseudouridine from uracil-55 in the psi GC loop of transfer RNAs.</text>
</comment>
<comment type="catalytic activity">
    <reaction evidence="1">
        <text>uridine(55) in tRNA = pseudouridine(55) in tRNA</text>
        <dbReference type="Rhea" id="RHEA:42532"/>
        <dbReference type="Rhea" id="RHEA-COMP:10101"/>
        <dbReference type="Rhea" id="RHEA-COMP:10102"/>
        <dbReference type="ChEBI" id="CHEBI:65314"/>
        <dbReference type="ChEBI" id="CHEBI:65315"/>
        <dbReference type="EC" id="5.4.99.25"/>
    </reaction>
</comment>
<comment type="similarity">
    <text evidence="1">Belongs to the pseudouridine synthase TruB family. Type 1 subfamily.</text>
</comment>
<organism>
    <name type="scientific">Pseudomonas paraeruginosa (strain DSM 24068 / PA7)</name>
    <name type="common">Pseudomonas aeruginosa (strain PA7)</name>
    <dbReference type="NCBI Taxonomy" id="381754"/>
    <lineage>
        <taxon>Bacteria</taxon>
        <taxon>Pseudomonadati</taxon>
        <taxon>Pseudomonadota</taxon>
        <taxon>Gammaproteobacteria</taxon>
        <taxon>Pseudomonadales</taxon>
        <taxon>Pseudomonadaceae</taxon>
        <taxon>Pseudomonas</taxon>
        <taxon>Pseudomonas paraeruginosa</taxon>
    </lineage>
</organism>